<sequence length="213" mass="23369">MKLLLFITIAYLLGSIPTGLWIGQYFYHINLREHGSGNTGTTNTFRILGVKAGTATLAIDMFKGTLSILLPIIFGMTSISSIAIGFFAVLGHTFPIFANFKGGKAVATSAGVLLGFAPLYLFFLASIFVLVLYLFSMISLASVVSAIVGVLSVLTFPAIHFLLPNYDYFLTFIVILLAFIIIIRHKDNISRIKHHTENLIPWGLNLSKQVPKK</sequence>
<gene>
    <name evidence="1" type="primary">plsY</name>
    <name type="ordered locus">SpyM51098</name>
</gene>
<dbReference type="EC" id="2.3.1.275" evidence="1"/>
<dbReference type="EMBL" id="AM295007">
    <property type="protein sequence ID" value="CAM30424.1"/>
    <property type="molecule type" value="Genomic_DNA"/>
</dbReference>
<dbReference type="RefSeq" id="WP_002984911.1">
    <property type="nucleotide sequence ID" value="NC_009332.1"/>
</dbReference>
<dbReference type="SMR" id="A2REZ8"/>
<dbReference type="GeneID" id="69900991"/>
<dbReference type="KEGG" id="spf:SpyM51098"/>
<dbReference type="HOGENOM" id="CLU_081254_3_0_9"/>
<dbReference type="UniPathway" id="UPA00085"/>
<dbReference type="GO" id="GO:0005886">
    <property type="term" value="C:plasma membrane"/>
    <property type="evidence" value="ECO:0007669"/>
    <property type="project" value="UniProtKB-SubCell"/>
</dbReference>
<dbReference type="GO" id="GO:0043772">
    <property type="term" value="F:acyl-phosphate glycerol-3-phosphate acyltransferase activity"/>
    <property type="evidence" value="ECO:0007669"/>
    <property type="project" value="UniProtKB-UniRule"/>
</dbReference>
<dbReference type="GO" id="GO:0008654">
    <property type="term" value="P:phospholipid biosynthetic process"/>
    <property type="evidence" value="ECO:0007669"/>
    <property type="project" value="UniProtKB-UniRule"/>
</dbReference>
<dbReference type="HAMAP" id="MF_01043">
    <property type="entry name" value="PlsY"/>
    <property type="match status" value="1"/>
</dbReference>
<dbReference type="InterPro" id="IPR003811">
    <property type="entry name" value="G3P_acylTferase_PlsY"/>
</dbReference>
<dbReference type="NCBIfam" id="TIGR00023">
    <property type="entry name" value="glycerol-3-phosphate 1-O-acyltransferase PlsY"/>
    <property type="match status" value="1"/>
</dbReference>
<dbReference type="PANTHER" id="PTHR30309:SF0">
    <property type="entry name" value="GLYCEROL-3-PHOSPHATE ACYLTRANSFERASE-RELATED"/>
    <property type="match status" value="1"/>
</dbReference>
<dbReference type="PANTHER" id="PTHR30309">
    <property type="entry name" value="INNER MEMBRANE PROTEIN YGIH"/>
    <property type="match status" value="1"/>
</dbReference>
<dbReference type="Pfam" id="PF02660">
    <property type="entry name" value="G3P_acyltransf"/>
    <property type="match status" value="1"/>
</dbReference>
<dbReference type="SMART" id="SM01207">
    <property type="entry name" value="G3P_acyltransf"/>
    <property type="match status" value="1"/>
</dbReference>
<keyword id="KW-1003">Cell membrane</keyword>
<keyword id="KW-0444">Lipid biosynthesis</keyword>
<keyword id="KW-0443">Lipid metabolism</keyword>
<keyword id="KW-0472">Membrane</keyword>
<keyword id="KW-0594">Phospholipid biosynthesis</keyword>
<keyword id="KW-1208">Phospholipid metabolism</keyword>
<keyword id="KW-0808">Transferase</keyword>
<keyword id="KW-0812">Transmembrane</keyword>
<keyword id="KW-1133">Transmembrane helix</keyword>
<name>PLSY_STRPG</name>
<accession>A2REZ8</accession>
<feature type="chain" id="PRO_1000064233" description="Glycerol-3-phosphate acyltransferase">
    <location>
        <begin position="1"/>
        <end position="213"/>
    </location>
</feature>
<feature type="transmembrane region" description="Helical" evidence="1">
    <location>
        <begin position="3"/>
        <end position="23"/>
    </location>
</feature>
<feature type="transmembrane region" description="Helical" evidence="1">
    <location>
        <begin position="68"/>
        <end position="88"/>
    </location>
</feature>
<feature type="transmembrane region" description="Helical" evidence="1">
    <location>
        <begin position="112"/>
        <end position="132"/>
    </location>
</feature>
<feature type="transmembrane region" description="Helical" evidence="1">
    <location>
        <begin position="134"/>
        <end position="154"/>
    </location>
</feature>
<feature type="transmembrane region" description="Helical" evidence="1">
    <location>
        <begin position="163"/>
        <end position="183"/>
    </location>
</feature>
<organism>
    <name type="scientific">Streptococcus pyogenes serotype M5 (strain Manfredo)</name>
    <dbReference type="NCBI Taxonomy" id="160491"/>
    <lineage>
        <taxon>Bacteria</taxon>
        <taxon>Bacillati</taxon>
        <taxon>Bacillota</taxon>
        <taxon>Bacilli</taxon>
        <taxon>Lactobacillales</taxon>
        <taxon>Streptococcaceae</taxon>
        <taxon>Streptococcus</taxon>
    </lineage>
</organism>
<protein>
    <recommendedName>
        <fullName evidence="1">Glycerol-3-phosphate acyltransferase</fullName>
    </recommendedName>
    <alternativeName>
        <fullName evidence="1">Acyl-PO4 G3P acyltransferase</fullName>
    </alternativeName>
    <alternativeName>
        <fullName evidence="1">Acyl-phosphate--glycerol-3-phosphate acyltransferase</fullName>
    </alternativeName>
    <alternativeName>
        <fullName evidence="1">G3P acyltransferase</fullName>
        <shortName evidence="1">GPAT</shortName>
        <ecNumber evidence="1">2.3.1.275</ecNumber>
    </alternativeName>
    <alternativeName>
        <fullName evidence="1">Lysophosphatidic acid synthase</fullName>
        <shortName evidence="1">LPA synthase</shortName>
    </alternativeName>
</protein>
<evidence type="ECO:0000255" key="1">
    <source>
        <dbReference type="HAMAP-Rule" id="MF_01043"/>
    </source>
</evidence>
<reference key="1">
    <citation type="journal article" date="2007" name="J. Bacteriol.">
        <title>Complete genome of acute rheumatic fever-associated serotype M5 Streptococcus pyogenes strain Manfredo.</title>
        <authorList>
            <person name="Holden M.T.G."/>
            <person name="Scott A."/>
            <person name="Cherevach I."/>
            <person name="Chillingworth T."/>
            <person name="Churcher C."/>
            <person name="Cronin A."/>
            <person name="Dowd L."/>
            <person name="Feltwell T."/>
            <person name="Hamlin N."/>
            <person name="Holroyd S."/>
            <person name="Jagels K."/>
            <person name="Moule S."/>
            <person name="Mungall K."/>
            <person name="Quail M.A."/>
            <person name="Price C."/>
            <person name="Rabbinowitsch E."/>
            <person name="Sharp S."/>
            <person name="Skelton J."/>
            <person name="Whitehead S."/>
            <person name="Barrell B.G."/>
            <person name="Kehoe M."/>
            <person name="Parkhill J."/>
        </authorList>
    </citation>
    <scope>NUCLEOTIDE SEQUENCE [LARGE SCALE GENOMIC DNA]</scope>
    <source>
        <strain>Manfredo</strain>
    </source>
</reference>
<proteinExistence type="inferred from homology"/>
<comment type="function">
    <text evidence="1">Catalyzes the transfer of an acyl group from acyl-phosphate (acyl-PO(4)) to glycerol-3-phosphate (G3P) to form lysophosphatidic acid (LPA). This enzyme utilizes acyl-phosphate as fatty acyl donor, but not acyl-CoA or acyl-ACP.</text>
</comment>
<comment type="catalytic activity">
    <reaction evidence="1">
        <text>an acyl phosphate + sn-glycerol 3-phosphate = a 1-acyl-sn-glycero-3-phosphate + phosphate</text>
        <dbReference type="Rhea" id="RHEA:34075"/>
        <dbReference type="ChEBI" id="CHEBI:43474"/>
        <dbReference type="ChEBI" id="CHEBI:57597"/>
        <dbReference type="ChEBI" id="CHEBI:57970"/>
        <dbReference type="ChEBI" id="CHEBI:59918"/>
        <dbReference type="EC" id="2.3.1.275"/>
    </reaction>
</comment>
<comment type="pathway">
    <text evidence="1">Lipid metabolism; phospholipid metabolism.</text>
</comment>
<comment type="subunit">
    <text evidence="1">Probably interacts with PlsX.</text>
</comment>
<comment type="subcellular location">
    <subcellularLocation>
        <location evidence="1">Cell membrane</location>
        <topology evidence="1">Multi-pass membrane protein</topology>
    </subcellularLocation>
</comment>
<comment type="similarity">
    <text evidence="1">Belongs to the PlsY family.</text>
</comment>